<organism>
    <name type="scientific">Yersinia pestis bv. Antiqua (strain Antiqua)</name>
    <dbReference type="NCBI Taxonomy" id="360102"/>
    <lineage>
        <taxon>Bacteria</taxon>
        <taxon>Pseudomonadati</taxon>
        <taxon>Pseudomonadota</taxon>
        <taxon>Gammaproteobacteria</taxon>
        <taxon>Enterobacterales</taxon>
        <taxon>Yersiniaceae</taxon>
        <taxon>Yersinia</taxon>
    </lineage>
</organism>
<dbReference type="EC" id="3.1.21.2" evidence="1"/>
<dbReference type="EMBL" id="CP000308">
    <property type="protein sequence ID" value="ABG12990.1"/>
    <property type="molecule type" value="Genomic_DNA"/>
</dbReference>
<dbReference type="RefSeq" id="WP_002208791.1">
    <property type="nucleotide sequence ID" value="NZ_CP009906.1"/>
</dbReference>
<dbReference type="SMR" id="Q1C982"/>
<dbReference type="GeneID" id="57977438"/>
<dbReference type="KEGG" id="ypa:YPA_1023"/>
<dbReference type="Proteomes" id="UP000001971">
    <property type="component" value="Chromosome"/>
</dbReference>
<dbReference type="GO" id="GO:0008833">
    <property type="term" value="F:deoxyribonuclease IV (phage-T4-induced) activity"/>
    <property type="evidence" value="ECO:0007669"/>
    <property type="project" value="UniProtKB-UniRule"/>
</dbReference>
<dbReference type="GO" id="GO:0003677">
    <property type="term" value="F:DNA binding"/>
    <property type="evidence" value="ECO:0007669"/>
    <property type="project" value="InterPro"/>
</dbReference>
<dbReference type="GO" id="GO:0003906">
    <property type="term" value="F:DNA-(apurinic or apyrimidinic site) endonuclease activity"/>
    <property type="evidence" value="ECO:0007669"/>
    <property type="project" value="TreeGrafter"/>
</dbReference>
<dbReference type="GO" id="GO:0008081">
    <property type="term" value="F:phosphoric diester hydrolase activity"/>
    <property type="evidence" value="ECO:0007669"/>
    <property type="project" value="TreeGrafter"/>
</dbReference>
<dbReference type="GO" id="GO:0008270">
    <property type="term" value="F:zinc ion binding"/>
    <property type="evidence" value="ECO:0007669"/>
    <property type="project" value="UniProtKB-UniRule"/>
</dbReference>
<dbReference type="GO" id="GO:0006284">
    <property type="term" value="P:base-excision repair"/>
    <property type="evidence" value="ECO:0007669"/>
    <property type="project" value="TreeGrafter"/>
</dbReference>
<dbReference type="CDD" id="cd00019">
    <property type="entry name" value="AP2Ec"/>
    <property type="match status" value="1"/>
</dbReference>
<dbReference type="FunFam" id="3.20.20.150:FF:000001">
    <property type="entry name" value="Probable endonuclease 4"/>
    <property type="match status" value="1"/>
</dbReference>
<dbReference type="Gene3D" id="3.20.20.150">
    <property type="entry name" value="Divalent-metal-dependent TIM barrel enzymes"/>
    <property type="match status" value="1"/>
</dbReference>
<dbReference type="HAMAP" id="MF_00152">
    <property type="entry name" value="Nfo"/>
    <property type="match status" value="1"/>
</dbReference>
<dbReference type="InterPro" id="IPR001719">
    <property type="entry name" value="AP_endonuc_2"/>
</dbReference>
<dbReference type="InterPro" id="IPR018246">
    <property type="entry name" value="AP_endonuc_F2_Zn_BS"/>
</dbReference>
<dbReference type="InterPro" id="IPR036237">
    <property type="entry name" value="Xyl_isomerase-like_sf"/>
</dbReference>
<dbReference type="InterPro" id="IPR013022">
    <property type="entry name" value="Xyl_isomerase-like_TIM-brl"/>
</dbReference>
<dbReference type="NCBIfam" id="TIGR00587">
    <property type="entry name" value="nfo"/>
    <property type="match status" value="1"/>
</dbReference>
<dbReference type="NCBIfam" id="NF002199">
    <property type="entry name" value="PRK01060.1-4"/>
    <property type="match status" value="1"/>
</dbReference>
<dbReference type="PANTHER" id="PTHR21445:SF0">
    <property type="entry name" value="APURINIC-APYRIMIDINIC ENDONUCLEASE"/>
    <property type="match status" value="1"/>
</dbReference>
<dbReference type="PANTHER" id="PTHR21445">
    <property type="entry name" value="ENDONUCLEASE IV ENDODEOXYRIBONUCLEASE IV"/>
    <property type="match status" value="1"/>
</dbReference>
<dbReference type="Pfam" id="PF01261">
    <property type="entry name" value="AP_endonuc_2"/>
    <property type="match status" value="1"/>
</dbReference>
<dbReference type="SMART" id="SM00518">
    <property type="entry name" value="AP2Ec"/>
    <property type="match status" value="1"/>
</dbReference>
<dbReference type="SUPFAM" id="SSF51658">
    <property type="entry name" value="Xylose isomerase-like"/>
    <property type="match status" value="1"/>
</dbReference>
<dbReference type="PROSITE" id="PS00729">
    <property type="entry name" value="AP_NUCLEASE_F2_1"/>
    <property type="match status" value="1"/>
</dbReference>
<dbReference type="PROSITE" id="PS00730">
    <property type="entry name" value="AP_NUCLEASE_F2_2"/>
    <property type="match status" value="1"/>
</dbReference>
<dbReference type="PROSITE" id="PS00731">
    <property type="entry name" value="AP_NUCLEASE_F2_3"/>
    <property type="match status" value="1"/>
</dbReference>
<dbReference type="PROSITE" id="PS51432">
    <property type="entry name" value="AP_NUCLEASE_F2_4"/>
    <property type="match status" value="1"/>
</dbReference>
<protein>
    <recommendedName>
        <fullName evidence="1">Probable endonuclease 4</fullName>
        <ecNumber evidence="1">3.1.21.2</ecNumber>
    </recommendedName>
    <alternativeName>
        <fullName evidence="1">Endodeoxyribonuclease IV</fullName>
    </alternativeName>
    <alternativeName>
        <fullName evidence="1">Endonuclease IV</fullName>
    </alternativeName>
</protein>
<feature type="chain" id="PRO_1000011348" description="Probable endonuclease 4">
    <location>
        <begin position="1"/>
        <end position="285"/>
    </location>
</feature>
<feature type="binding site" evidence="1">
    <location>
        <position position="69"/>
    </location>
    <ligand>
        <name>Zn(2+)</name>
        <dbReference type="ChEBI" id="CHEBI:29105"/>
        <label>1</label>
    </ligand>
</feature>
<feature type="binding site" evidence="1">
    <location>
        <position position="109"/>
    </location>
    <ligand>
        <name>Zn(2+)</name>
        <dbReference type="ChEBI" id="CHEBI:29105"/>
        <label>1</label>
    </ligand>
</feature>
<feature type="binding site" evidence="1">
    <location>
        <position position="145"/>
    </location>
    <ligand>
        <name>Zn(2+)</name>
        <dbReference type="ChEBI" id="CHEBI:29105"/>
        <label>1</label>
    </ligand>
</feature>
<feature type="binding site" evidence="1">
    <location>
        <position position="145"/>
    </location>
    <ligand>
        <name>Zn(2+)</name>
        <dbReference type="ChEBI" id="CHEBI:29105"/>
        <label>2</label>
    </ligand>
</feature>
<feature type="binding site" evidence="1">
    <location>
        <position position="179"/>
    </location>
    <ligand>
        <name>Zn(2+)</name>
        <dbReference type="ChEBI" id="CHEBI:29105"/>
        <label>2</label>
    </ligand>
</feature>
<feature type="binding site" evidence="1">
    <location>
        <position position="182"/>
    </location>
    <ligand>
        <name>Zn(2+)</name>
        <dbReference type="ChEBI" id="CHEBI:29105"/>
        <label>3</label>
    </ligand>
</feature>
<feature type="binding site" evidence="1">
    <location>
        <position position="216"/>
    </location>
    <ligand>
        <name>Zn(2+)</name>
        <dbReference type="ChEBI" id="CHEBI:29105"/>
        <label>2</label>
    </ligand>
</feature>
<feature type="binding site" evidence="1">
    <location>
        <position position="229"/>
    </location>
    <ligand>
        <name>Zn(2+)</name>
        <dbReference type="ChEBI" id="CHEBI:29105"/>
        <label>3</label>
    </ligand>
</feature>
<feature type="binding site" evidence="1">
    <location>
        <position position="231"/>
    </location>
    <ligand>
        <name>Zn(2+)</name>
        <dbReference type="ChEBI" id="CHEBI:29105"/>
        <label>3</label>
    </ligand>
</feature>
<feature type="binding site" evidence="1">
    <location>
        <position position="261"/>
    </location>
    <ligand>
        <name>Zn(2+)</name>
        <dbReference type="ChEBI" id="CHEBI:29105"/>
        <label>2</label>
    </ligand>
</feature>
<name>END4_YERPA</name>
<evidence type="ECO:0000255" key="1">
    <source>
        <dbReference type="HAMAP-Rule" id="MF_00152"/>
    </source>
</evidence>
<keyword id="KW-0227">DNA damage</keyword>
<keyword id="KW-0234">DNA repair</keyword>
<keyword id="KW-0255">Endonuclease</keyword>
<keyword id="KW-0378">Hydrolase</keyword>
<keyword id="KW-0479">Metal-binding</keyword>
<keyword id="KW-0540">Nuclease</keyword>
<keyword id="KW-0862">Zinc</keyword>
<comment type="function">
    <text evidence="1">Endonuclease IV plays a role in DNA repair. It cleaves phosphodiester bonds at apurinic or apyrimidinic (AP) sites, generating a 3'-hydroxyl group and a 5'-terminal sugar phosphate.</text>
</comment>
<comment type="catalytic activity">
    <reaction evidence="1">
        <text>Endonucleolytic cleavage to 5'-phosphooligonucleotide end-products.</text>
        <dbReference type="EC" id="3.1.21.2"/>
    </reaction>
</comment>
<comment type="cofactor">
    <cofactor evidence="1">
        <name>Zn(2+)</name>
        <dbReference type="ChEBI" id="CHEBI:29105"/>
    </cofactor>
    <text evidence="1">Binds 3 Zn(2+) ions.</text>
</comment>
<comment type="similarity">
    <text evidence="1">Belongs to the AP endonuclease 2 family.</text>
</comment>
<accession>Q1C982</accession>
<gene>
    <name evidence="1" type="primary">nfo</name>
    <name type="ordered locus">YPA_1023</name>
</gene>
<proteinExistence type="inferred from homology"/>
<reference key="1">
    <citation type="journal article" date="2006" name="J. Bacteriol.">
        <title>Complete genome sequence of Yersinia pestis strains Antiqua and Nepal516: evidence of gene reduction in an emerging pathogen.</title>
        <authorList>
            <person name="Chain P.S.G."/>
            <person name="Hu P."/>
            <person name="Malfatti S.A."/>
            <person name="Radnedge L."/>
            <person name="Larimer F."/>
            <person name="Vergez L.M."/>
            <person name="Worsham P."/>
            <person name="Chu M.C."/>
            <person name="Andersen G.L."/>
        </authorList>
    </citation>
    <scope>NUCLEOTIDE SEQUENCE [LARGE SCALE GENOMIC DNA]</scope>
    <source>
        <strain>Antiqua</strain>
    </source>
</reference>
<sequence length="285" mass="31672">MKFVGAHVSAAGGVDQAVIRAHELEATAFALFTKNQRQWRAAPLAEDVIEKFKLACEKYGYTSAQILPHDSYLINLGHPVTEALEKSREAFIDELVRCQQLGLSLLNFHPGSHLLQIDEDQCLARIAESINIALDATEGVTAVIENTAGQGSNLGFKFEHLAAIIERVEDKSRVGVCIDTCHAFAAGYDLRTEEDCEHTFAALGKIVGFQYLRGMHLNDAKSEFNSRVDRHHSLGEGNIGKTVFSYIMRDSRFDNIPLILETVNMDIWAEEIAWLKSQAEIEPSL</sequence>